<sequence>MSFFWLFPFLLHLSFADSLSPLSAPVQNFIHLNHSCPSSILTYSRNSTYFTNLKTLLSSLSSRNASYSTGFQTATAGQAPDRVTGLFLCRGDVSQEVCRNCVAFSVKETLYWCPYNKEVVLYYDECMLRYSHRNILSTVTYDGSAILLNGANISSSNQNQVDEFRDLVSSTLNLAAVEAANSSKKFYTRKVITPQPLYLLVQCTPDLTRQDCLRCLQKSIKGMSLYRIGGRFFYPSCNSRYENYSFYNETATRSSSPPSLPPRSTPQQQLKLAPPPLISERGKGRNSSVIIVVVVPIIALLLLFVAFFSLRAKKTRTNYEREPLTEESDDITTAGSLQFDFKAIEAATNKFCETNKLGQGGFGEVYKGIFPSGVQVAVKRLSKTSGQGEREFANEVIVVAKLQHRNLVRLLGFCLERDERILVYEFVPNKSLDYFIFDSTMQSLLDWTRRYKIIGGIARGILYLHQDSRLTIIHRDLKAGNILLGDDMNAKIADFGMARIFGMDQTEANTRRIVGTYGYMSPEYAMYGQFSMKSDVYSFGVLVLEIISGKKNSNVYQMDGTSAGNLVTYTWRLWSNGSPLELVDPSFRDNYRINEVSRCIHIALLCVQEEAEDRPTMSAIVQMLTTSSIALAVPQRPGFFFRSSKHEQVGLVDRLSINTSALCSVDDASITNVTPR</sequence>
<gene>
    <name type="primary">CRK4</name>
    <name type="ordered locus">At3g45860</name>
    <name type="ORF">F16L2_70</name>
</gene>
<evidence type="ECO:0000250" key="1">
    <source>
        <dbReference type="UniProtKB" id="O48814"/>
    </source>
</evidence>
<evidence type="ECO:0000255" key="2"/>
<evidence type="ECO:0000255" key="3">
    <source>
        <dbReference type="PROSITE-ProRule" id="PRU00159"/>
    </source>
</evidence>
<evidence type="ECO:0000255" key="4">
    <source>
        <dbReference type="PROSITE-ProRule" id="PRU00806"/>
    </source>
</evidence>
<evidence type="ECO:0000255" key="5">
    <source>
        <dbReference type="PROSITE-ProRule" id="PRU10027"/>
    </source>
</evidence>
<evidence type="ECO:0000256" key="6">
    <source>
        <dbReference type="SAM" id="MobiDB-lite"/>
    </source>
</evidence>
<evidence type="ECO:0000269" key="7">
    <source>
    </source>
</evidence>
<evidence type="ECO:0000305" key="8"/>
<keyword id="KW-0067">ATP-binding</keyword>
<keyword id="KW-0325">Glycoprotein</keyword>
<keyword id="KW-0418">Kinase</keyword>
<keyword id="KW-0472">Membrane</keyword>
<keyword id="KW-0547">Nucleotide-binding</keyword>
<keyword id="KW-0597">Phosphoprotein</keyword>
<keyword id="KW-0675">Receptor</keyword>
<keyword id="KW-1185">Reference proteome</keyword>
<keyword id="KW-0677">Repeat</keyword>
<keyword id="KW-0723">Serine/threonine-protein kinase</keyword>
<keyword id="KW-0732">Signal</keyword>
<keyword id="KW-0808">Transferase</keyword>
<keyword id="KW-0812">Transmembrane</keyword>
<keyword id="KW-1133">Transmembrane helix</keyword>
<proteinExistence type="evidence at transcript level"/>
<feature type="signal peptide" evidence="2">
    <location>
        <begin position="1"/>
        <end position="16"/>
    </location>
</feature>
<feature type="chain" id="PRO_0000295051" description="Cysteine-rich receptor-like protein kinase 4">
    <location>
        <begin position="17"/>
        <end position="676"/>
    </location>
</feature>
<feature type="topological domain" description="Extracellular" evidence="2">
    <location>
        <begin position="17"/>
        <end position="287"/>
    </location>
</feature>
<feature type="transmembrane region" description="Helical" evidence="2">
    <location>
        <begin position="288"/>
        <end position="308"/>
    </location>
</feature>
<feature type="topological domain" description="Cytoplasmic" evidence="2">
    <location>
        <begin position="309"/>
        <end position="676"/>
    </location>
</feature>
<feature type="domain" description="Gnk2-homologous 1" evidence="4">
    <location>
        <begin position="31"/>
        <end position="135"/>
    </location>
</feature>
<feature type="domain" description="Gnk2-homologous 2" evidence="4">
    <location>
        <begin position="146"/>
        <end position="246"/>
    </location>
</feature>
<feature type="domain" description="Protein kinase" evidence="3">
    <location>
        <begin position="351"/>
        <end position="631"/>
    </location>
</feature>
<feature type="region of interest" description="Disordered" evidence="6">
    <location>
        <begin position="252"/>
        <end position="279"/>
    </location>
</feature>
<feature type="active site" description="Proton acceptor" evidence="3 5">
    <location>
        <position position="476"/>
    </location>
</feature>
<feature type="binding site" evidence="3">
    <location>
        <begin position="357"/>
        <end position="365"/>
    </location>
    <ligand>
        <name>ATP</name>
        <dbReference type="ChEBI" id="CHEBI:30616"/>
    </ligand>
</feature>
<feature type="binding site" evidence="3">
    <location>
        <position position="379"/>
    </location>
    <ligand>
        <name>ATP</name>
        <dbReference type="ChEBI" id="CHEBI:30616"/>
    </ligand>
</feature>
<feature type="modified residue" description="Phosphotyrosine" evidence="1">
    <location>
        <position position="424"/>
    </location>
</feature>
<feature type="modified residue" description="Phosphothreonine" evidence="1">
    <location>
        <position position="516"/>
    </location>
</feature>
<feature type="modified residue" description="Phosphotyrosine" evidence="1">
    <location>
        <position position="524"/>
    </location>
</feature>
<feature type="glycosylation site" description="N-linked (GlcNAc...) asparagine" evidence="2">
    <location>
        <position position="33"/>
    </location>
</feature>
<feature type="glycosylation site" description="N-linked (GlcNAc...) asparagine" evidence="2">
    <location>
        <position position="46"/>
    </location>
</feature>
<feature type="glycosylation site" description="N-linked (GlcNAc...) asparagine" evidence="2">
    <location>
        <position position="64"/>
    </location>
</feature>
<feature type="glycosylation site" description="N-linked (GlcNAc...) asparagine" evidence="2">
    <location>
        <position position="152"/>
    </location>
</feature>
<feature type="glycosylation site" description="N-linked (GlcNAc...) asparagine" evidence="2">
    <location>
        <position position="181"/>
    </location>
</feature>
<feature type="glycosylation site" description="N-linked (GlcNAc...) asparagine" evidence="2">
    <location>
        <position position="243"/>
    </location>
</feature>
<feature type="glycosylation site" description="N-linked (GlcNAc...) asparagine" evidence="2">
    <location>
        <position position="248"/>
    </location>
</feature>
<feature type="glycosylation site" description="N-linked (GlcNAc...) asparagine" evidence="2">
    <location>
        <position position="286"/>
    </location>
</feature>
<protein>
    <recommendedName>
        <fullName>Cysteine-rich receptor-like protein kinase 4</fullName>
        <shortName>Cysteine-rich RLK4</shortName>
        <ecNumber>2.7.11.-</ecNumber>
    </recommendedName>
</protein>
<dbReference type="EC" id="2.7.11.-"/>
<dbReference type="EMBL" id="AL162459">
    <property type="protein sequence ID" value="CAB82810.1"/>
    <property type="molecule type" value="Genomic_DNA"/>
</dbReference>
<dbReference type="EMBL" id="CP002686">
    <property type="protein sequence ID" value="AEE78083.1"/>
    <property type="molecule type" value="Genomic_DNA"/>
</dbReference>
<dbReference type="PIR" id="T47526">
    <property type="entry name" value="T47526"/>
</dbReference>
<dbReference type="RefSeq" id="NP_190172.1">
    <property type="nucleotide sequence ID" value="NM_114455.2"/>
</dbReference>
<dbReference type="SMR" id="Q9LZU4"/>
<dbReference type="BioGRID" id="9049">
    <property type="interactions" value="1"/>
</dbReference>
<dbReference type="FunCoup" id="Q9LZU4">
    <property type="interactions" value="177"/>
</dbReference>
<dbReference type="STRING" id="3702.Q9LZU4"/>
<dbReference type="GlyCosmos" id="Q9LZU4">
    <property type="glycosylation" value="8 sites, No reported glycans"/>
</dbReference>
<dbReference type="GlyGen" id="Q9LZU4">
    <property type="glycosylation" value="8 sites"/>
</dbReference>
<dbReference type="PaxDb" id="3702-AT3G45860.1"/>
<dbReference type="ProteomicsDB" id="224512"/>
<dbReference type="EnsemblPlants" id="AT3G45860.1">
    <property type="protein sequence ID" value="AT3G45860.1"/>
    <property type="gene ID" value="AT3G45860"/>
</dbReference>
<dbReference type="GeneID" id="823729"/>
<dbReference type="Gramene" id="AT3G45860.1">
    <property type="protein sequence ID" value="AT3G45860.1"/>
    <property type="gene ID" value="AT3G45860"/>
</dbReference>
<dbReference type="KEGG" id="ath:AT3G45860"/>
<dbReference type="Araport" id="AT3G45860"/>
<dbReference type="TAIR" id="AT3G45860">
    <property type="gene designation" value="CRK4"/>
</dbReference>
<dbReference type="eggNOG" id="ENOG502QWDY">
    <property type="taxonomic scope" value="Eukaryota"/>
</dbReference>
<dbReference type="HOGENOM" id="CLU_000288_35_2_1"/>
<dbReference type="InParanoid" id="Q9LZU4"/>
<dbReference type="OMA" id="TNKFCET"/>
<dbReference type="PhylomeDB" id="Q9LZU4"/>
<dbReference type="PRO" id="PR:Q9LZU4"/>
<dbReference type="Proteomes" id="UP000006548">
    <property type="component" value="Chromosome 3"/>
</dbReference>
<dbReference type="ExpressionAtlas" id="Q9LZU4">
    <property type="expression patterns" value="baseline and differential"/>
</dbReference>
<dbReference type="GO" id="GO:0016020">
    <property type="term" value="C:membrane"/>
    <property type="evidence" value="ECO:0007669"/>
    <property type="project" value="UniProtKB-SubCell"/>
</dbReference>
<dbReference type="GO" id="GO:0005524">
    <property type="term" value="F:ATP binding"/>
    <property type="evidence" value="ECO:0007669"/>
    <property type="project" value="UniProtKB-KW"/>
</dbReference>
<dbReference type="GO" id="GO:0106310">
    <property type="term" value="F:protein serine kinase activity"/>
    <property type="evidence" value="ECO:0007669"/>
    <property type="project" value="RHEA"/>
</dbReference>
<dbReference type="GO" id="GO:0004674">
    <property type="term" value="F:protein serine/threonine kinase activity"/>
    <property type="evidence" value="ECO:0007669"/>
    <property type="project" value="UniProtKB-KW"/>
</dbReference>
<dbReference type="GO" id="GO:0042742">
    <property type="term" value="P:defense response to bacterium"/>
    <property type="evidence" value="ECO:0000270"/>
    <property type="project" value="TAIR"/>
</dbReference>
<dbReference type="GO" id="GO:0012501">
    <property type="term" value="P:programmed cell death"/>
    <property type="evidence" value="ECO:0000315"/>
    <property type="project" value="TAIR"/>
</dbReference>
<dbReference type="GO" id="GO:0009751">
    <property type="term" value="P:response to salicylic acid"/>
    <property type="evidence" value="ECO:0000270"/>
    <property type="project" value="TAIR"/>
</dbReference>
<dbReference type="CDD" id="cd23509">
    <property type="entry name" value="Gnk2-like"/>
    <property type="match status" value="2"/>
</dbReference>
<dbReference type="CDD" id="cd14066">
    <property type="entry name" value="STKc_IRAK"/>
    <property type="match status" value="1"/>
</dbReference>
<dbReference type="FunFam" id="1.10.510.10:FF:000129">
    <property type="entry name" value="cysteine-rich receptor-like protein kinase 10"/>
    <property type="match status" value="1"/>
</dbReference>
<dbReference type="FunFam" id="3.30.430.20:FF:000003">
    <property type="entry name" value="Cysteine-rich RLK (RECEPTOR-like protein kinase) 10"/>
    <property type="match status" value="1"/>
</dbReference>
<dbReference type="FunFam" id="3.30.200.20:FF:000727">
    <property type="entry name" value="Cysteine-rich RLK (RECEPTOR-like protein kinase) 23"/>
    <property type="match status" value="1"/>
</dbReference>
<dbReference type="Gene3D" id="3.30.430.20">
    <property type="entry name" value="Gnk2 domain, C-X8-C-X2-C motif"/>
    <property type="match status" value="2"/>
</dbReference>
<dbReference type="Gene3D" id="3.30.200.20">
    <property type="entry name" value="Phosphorylase Kinase, domain 1"/>
    <property type="match status" value="1"/>
</dbReference>
<dbReference type="Gene3D" id="1.10.510.10">
    <property type="entry name" value="Transferase(Phosphotransferase) domain 1"/>
    <property type="match status" value="1"/>
</dbReference>
<dbReference type="InterPro" id="IPR002902">
    <property type="entry name" value="GNK2"/>
</dbReference>
<dbReference type="InterPro" id="IPR038408">
    <property type="entry name" value="GNK2_sf"/>
</dbReference>
<dbReference type="InterPro" id="IPR011009">
    <property type="entry name" value="Kinase-like_dom_sf"/>
</dbReference>
<dbReference type="InterPro" id="IPR000719">
    <property type="entry name" value="Prot_kinase_dom"/>
</dbReference>
<dbReference type="InterPro" id="IPR017441">
    <property type="entry name" value="Protein_kinase_ATP_BS"/>
</dbReference>
<dbReference type="InterPro" id="IPR001245">
    <property type="entry name" value="Ser-Thr/Tyr_kinase_cat_dom"/>
</dbReference>
<dbReference type="InterPro" id="IPR008271">
    <property type="entry name" value="Ser/Thr_kinase_AS"/>
</dbReference>
<dbReference type="PANTHER" id="PTHR27002:SF997">
    <property type="entry name" value="CYSTEINE-RICH RECEPTOR-LIKE PROTEIN KINASE 13-RELATED"/>
    <property type="match status" value="1"/>
</dbReference>
<dbReference type="PANTHER" id="PTHR27002">
    <property type="entry name" value="RECEPTOR-LIKE SERINE/THREONINE-PROTEIN KINASE SD1-8"/>
    <property type="match status" value="1"/>
</dbReference>
<dbReference type="Pfam" id="PF07714">
    <property type="entry name" value="PK_Tyr_Ser-Thr"/>
    <property type="match status" value="1"/>
</dbReference>
<dbReference type="Pfam" id="PF01657">
    <property type="entry name" value="Stress-antifung"/>
    <property type="match status" value="2"/>
</dbReference>
<dbReference type="SMART" id="SM00220">
    <property type="entry name" value="S_TKc"/>
    <property type="match status" value="1"/>
</dbReference>
<dbReference type="SUPFAM" id="SSF56112">
    <property type="entry name" value="Protein kinase-like (PK-like)"/>
    <property type="match status" value="1"/>
</dbReference>
<dbReference type="PROSITE" id="PS51473">
    <property type="entry name" value="GNK2"/>
    <property type="match status" value="2"/>
</dbReference>
<dbReference type="PROSITE" id="PS00107">
    <property type="entry name" value="PROTEIN_KINASE_ATP"/>
    <property type="match status" value="1"/>
</dbReference>
<dbReference type="PROSITE" id="PS50011">
    <property type="entry name" value="PROTEIN_KINASE_DOM"/>
    <property type="match status" value="1"/>
</dbReference>
<dbReference type="PROSITE" id="PS00108">
    <property type="entry name" value="PROTEIN_KINASE_ST"/>
    <property type="match status" value="1"/>
</dbReference>
<accession>Q9LZU4</accession>
<name>CRK4_ARATH</name>
<reference key="1">
    <citation type="journal article" date="2000" name="Nature">
        <title>Sequence and analysis of chromosome 3 of the plant Arabidopsis thaliana.</title>
        <authorList>
            <person name="Salanoubat M."/>
            <person name="Lemcke K."/>
            <person name="Rieger M."/>
            <person name="Ansorge W."/>
            <person name="Unseld M."/>
            <person name="Fartmann B."/>
            <person name="Valle G."/>
            <person name="Bloecker H."/>
            <person name="Perez-Alonso M."/>
            <person name="Obermaier B."/>
            <person name="Delseny M."/>
            <person name="Boutry M."/>
            <person name="Grivell L.A."/>
            <person name="Mache R."/>
            <person name="Puigdomenech P."/>
            <person name="De Simone V."/>
            <person name="Choisne N."/>
            <person name="Artiguenave F."/>
            <person name="Robert C."/>
            <person name="Brottier P."/>
            <person name="Wincker P."/>
            <person name="Cattolico L."/>
            <person name="Weissenbach J."/>
            <person name="Saurin W."/>
            <person name="Quetier F."/>
            <person name="Schaefer M."/>
            <person name="Mueller-Auer S."/>
            <person name="Gabel C."/>
            <person name="Fuchs M."/>
            <person name="Benes V."/>
            <person name="Wurmbach E."/>
            <person name="Drzonek H."/>
            <person name="Erfle H."/>
            <person name="Jordan N."/>
            <person name="Bangert S."/>
            <person name="Wiedelmann R."/>
            <person name="Kranz H."/>
            <person name="Voss H."/>
            <person name="Holland R."/>
            <person name="Brandt P."/>
            <person name="Nyakatura G."/>
            <person name="Vezzi A."/>
            <person name="D'Angelo M."/>
            <person name="Pallavicini A."/>
            <person name="Toppo S."/>
            <person name="Simionati B."/>
            <person name="Conrad A."/>
            <person name="Hornischer K."/>
            <person name="Kauer G."/>
            <person name="Loehnert T.-H."/>
            <person name="Nordsiek G."/>
            <person name="Reichelt J."/>
            <person name="Scharfe M."/>
            <person name="Schoen O."/>
            <person name="Bargues M."/>
            <person name="Terol J."/>
            <person name="Climent J."/>
            <person name="Navarro P."/>
            <person name="Collado C."/>
            <person name="Perez-Perez A."/>
            <person name="Ottenwaelder B."/>
            <person name="Duchemin D."/>
            <person name="Cooke R."/>
            <person name="Laudie M."/>
            <person name="Berger-Llauro C."/>
            <person name="Purnelle B."/>
            <person name="Masuy D."/>
            <person name="de Haan M."/>
            <person name="Maarse A.C."/>
            <person name="Alcaraz J.-P."/>
            <person name="Cottet A."/>
            <person name="Casacuberta E."/>
            <person name="Monfort A."/>
            <person name="Argiriou A."/>
            <person name="Flores M."/>
            <person name="Liguori R."/>
            <person name="Vitale D."/>
            <person name="Mannhaupt G."/>
            <person name="Haase D."/>
            <person name="Schoof H."/>
            <person name="Rudd S."/>
            <person name="Zaccaria P."/>
            <person name="Mewes H.-W."/>
            <person name="Mayer K.F.X."/>
            <person name="Kaul S."/>
            <person name="Town C.D."/>
            <person name="Koo H.L."/>
            <person name="Tallon L.J."/>
            <person name="Jenkins J."/>
            <person name="Rooney T."/>
            <person name="Rizzo M."/>
            <person name="Walts A."/>
            <person name="Utterback T."/>
            <person name="Fujii C.Y."/>
            <person name="Shea T.P."/>
            <person name="Creasy T.H."/>
            <person name="Haas B."/>
            <person name="Maiti R."/>
            <person name="Wu D."/>
            <person name="Peterson J."/>
            <person name="Van Aken S."/>
            <person name="Pai G."/>
            <person name="Militscher J."/>
            <person name="Sellers P."/>
            <person name="Gill J.E."/>
            <person name="Feldblyum T.V."/>
            <person name="Preuss D."/>
            <person name="Lin X."/>
            <person name="Nierman W.C."/>
            <person name="Salzberg S.L."/>
            <person name="White O."/>
            <person name="Venter J.C."/>
            <person name="Fraser C.M."/>
            <person name="Kaneko T."/>
            <person name="Nakamura Y."/>
            <person name="Sato S."/>
            <person name="Kato T."/>
            <person name="Asamizu E."/>
            <person name="Sasamoto S."/>
            <person name="Kimura T."/>
            <person name="Idesawa K."/>
            <person name="Kawashima K."/>
            <person name="Kishida Y."/>
            <person name="Kiyokawa C."/>
            <person name="Kohara M."/>
            <person name="Matsumoto M."/>
            <person name="Matsuno A."/>
            <person name="Muraki A."/>
            <person name="Nakayama S."/>
            <person name="Nakazaki N."/>
            <person name="Shinpo S."/>
            <person name="Takeuchi C."/>
            <person name="Wada T."/>
            <person name="Watanabe A."/>
            <person name="Yamada M."/>
            <person name="Yasuda M."/>
            <person name="Tabata S."/>
        </authorList>
    </citation>
    <scope>NUCLEOTIDE SEQUENCE [LARGE SCALE GENOMIC DNA]</scope>
    <source>
        <strain>cv. Columbia</strain>
    </source>
</reference>
<reference key="2">
    <citation type="journal article" date="2017" name="Plant J.">
        <title>Araport11: a complete reannotation of the Arabidopsis thaliana reference genome.</title>
        <authorList>
            <person name="Cheng C.Y."/>
            <person name="Krishnakumar V."/>
            <person name="Chan A.P."/>
            <person name="Thibaud-Nissen F."/>
            <person name="Schobel S."/>
            <person name="Town C.D."/>
        </authorList>
    </citation>
    <scope>GENOME REANNOTATION</scope>
    <source>
        <strain>cv. Columbia</strain>
    </source>
</reference>
<reference key="3">
    <citation type="journal article" date="2001" name="Plant Physiol.">
        <title>A superfamily of proteins with novel cysteine-rich repeats.</title>
        <authorList>
            <person name="Chen Z."/>
        </authorList>
    </citation>
    <scope>GENE FAMILY ORGANIZATION</scope>
    <scope>NOMENCLATURE</scope>
</reference>
<reference key="4">
    <citation type="journal article" date="2004" name="Plant Mol. Biol.">
        <title>Activation of hypersensitive cell death by pathogen-induced receptor-like protein kinases from Arabidopsis.</title>
        <authorList>
            <person name="Chen K."/>
            <person name="Fan B."/>
            <person name="Du L."/>
            <person name="Chen Z."/>
        </authorList>
    </citation>
    <scope>INDUCTION</scope>
</reference>
<organism>
    <name type="scientific">Arabidopsis thaliana</name>
    <name type="common">Mouse-ear cress</name>
    <dbReference type="NCBI Taxonomy" id="3702"/>
    <lineage>
        <taxon>Eukaryota</taxon>
        <taxon>Viridiplantae</taxon>
        <taxon>Streptophyta</taxon>
        <taxon>Embryophyta</taxon>
        <taxon>Tracheophyta</taxon>
        <taxon>Spermatophyta</taxon>
        <taxon>Magnoliopsida</taxon>
        <taxon>eudicotyledons</taxon>
        <taxon>Gunneridae</taxon>
        <taxon>Pentapetalae</taxon>
        <taxon>rosids</taxon>
        <taxon>malvids</taxon>
        <taxon>Brassicales</taxon>
        <taxon>Brassicaceae</taxon>
        <taxon>Camelineae</taxon>
        <taxon>Arabidopsis</taxon>
    </lineage>
</organism>
<comment type="catalytic activity">
    <reaction>
        <text>L-seryl-[protein] + ATP = O-phospho-L-seryl-[protein] + ADP + H(+)</text>
        <dbReference type="Rhea" id="RHEA:17989"/>
        <dbReference type="Rhea" id="RHEA-COMP:9863"/>
        <dbReference type="Rhea" id="RHEA-COMP:11604"/>
        <dbReference type="ChEBI" id="CHEBI:15378"/>
        <dbReference type="ChEBI" id="CHEBI:29999"/>
        <dbReference type="ChEBI" id="CHEBI:30616"/>
        <dbReference type="ChEBI" id="CHEBI:83421"/>
        <dbReference type="ChEBI" id="CHEBI:456216"/>
    </reaction>
</comment>
<comment type="catalytic activity">
    <reaction>
        <text>L-threonyl-[protein] + ATP = O-phospho-L-threonyl-[protein] + ADP + H(+)</text>
        <dbReference type="Rhea" id="RHEA:46608"/>
        <dbReference type="Rhea" id="RHEA-COMP:11060"/>
        <dbReference type="Rhea" id="RHEA-COMP:11605"/>
        <dbReference type="ChEBI" id="CHEBI:15378"/>
        <dbReference type="ChEBI" id="CHEBI:30013"/>
        <dbReference type="ChEBI" id="CHEBI:30616"/>
        <dbReference type="ChEBI" id="CHEBI:61977"/>
        <dbReference type="ChEBI" id="CHEBI:456216"/>
    </reaction>
</comment>
<comment type="subcellular location">
    <subcellularLocation>
        <location evidence="8">Membrane</location>
        <topology evidence="8">Single-pass membrane protein</topology>
    </subcellularLocation>
</comment>
<comment type="induction">
    <text evidence="7">By salicylic acid (SA) or by a bacterial pathogen infection.</text>
</comment>
<comment type="similarity">
    <text evidence="3">Belongs to the protein kinase superfamily. Ser/Thr protein kinase family. CRK subfamily.</text>
</comment>